<organism>
    <name type="scientific">Ruminiclostridium cellulolyticum (strain ATCC 35319 / DSM 5812 / JCM 6584 / H10)</name>
    <name type="common">Clostridium cellulolyticum</name>
    <dbReference type="NCBI Taxonomy" id="394503"/>
    <lineage>
        <taxon>Bacteria</taxon>
        <taxon>Bacillati</taxon>
        <taxon>Bacillota</taxon>
        <taxon>Clostridia</taxon>
        <taxon>Eubacteriales</taxon>
        <taxon>Oscillospiraceae</taxon>
        <taxon>Ruminiclostridium</taxon>
    </lineage>
</organism>
<evidence type="ECO:0000255" key="1">
    <source>
        <dbReference type="HAMAP-Rule" id="MF_00093"/>
    </source>
</evidence>
<feature type="chain" id="PRO_1000193482" description="Peptide chain release factor 1">
    <location>
        <begin position="1"/>
        <end position="359"/>
    </location>
</feature>
<feature type="modified residue" description="N5-methylglutamine" evidence="1">
    <location>
        <position position="233"/>
    </location>
</feature>
<accession>B8I562</accession>
<protein>
    <recommendedName>
        <fullName evidence="1">Peptide chain release factor 1</fullName>
        <shortName evidence="1">RF-1</shortName>
    </recommendedName>
</protein>
<sequence length="359" mass="41032">MFDKLQAAEDRYEEISHKLSDPDVINNQDEYKKYMKECSDLEEIVQKYREYTKVTKEIEEARELLEQTLDKDFREMVQQEFQEAQEKLEVIKRQLKILIVPKDPNDDKNVIVEIRGGAGGEEAALFAGVLFRAMAKYAEKKRWKYEILDSNPTELGGFKEVVFTIEGKGAYSRLKFESGVHRVQRVPSTESSGRIHTSTITVAVLPEVEEVDVDINPSDLRIDTYRASGAGGQHINKTDSAIRITHMPTGIVVSCQDERSQHKNKDKAMKILRSKLYEIAQEQQINEVAQDRKNQVGTGDRSERIRTYNYPQGRVTDHRINLTLYKLEQVLDGDLDELIDALITTDQSEKLGSGSDDEG</sequence>
<proteinExistence type="inferred from homology"/>
<reference key="1">
    <citation type="submission" date="2009-01" db="EMBL/GenBank/DDBJ databases">
        <title>Complete sequence of Clostridium cellulolyticum H10.</title>
        <authorList>
            <consortium name="US DOE Joint Genome Institute"/>
            <person name="Lucas S."/>
            <person name="Copeland A."/>
            <person name="Lapidus A."/>
            <person name="Glavina del Rio T."/>
            <person name="Dalin E."/>
            <person name="Tice H."/>
            <person name="Bruce D."/>
            <person name="Goodwin L."/>
            <person name="Pitluck S."/>
            <person name="Chertkov O."/>
            <person name="Saunders E."/>
            <person name="Brettin T."/>
            <person name="Detter J.C."/>
            <person name="Han C."/>
            <person name="Larimer F."/>
            <person name="Land M."/>
            <person name="Hauser L."/>
            <person name="Kyrpides N."/>
            <person name="Ivanova N."/>
            <person name="Zhou J."/>
            <person name="Richardson P."/>
        </authorList>
    </citation>
    <scope>NUCLEOTIDE SEQUENCE [LARGE SCALE GENOMIC DNA]</scope>
    <source>
        <strain>ATCC 35319 / DSM 5812 / JCM 6584 / H10</strain>
    </source>
</reference>
<comment type="function">
    <text evidence="1">Peptide chain release factor 1 directs the termination of translation in response to the peptide chain termination codons UAG and UAA.</text>
</comment>
<comment type="subcellular location">
    <subcellularLocation>
        <location evidence="1">Cytoplasm</location>
    </subcellularLocation>
</comment>
<comment type="PTM">
    <text evidence="1">Methylated by PrmC. Methylation increases the termination efficiency of RF1.</text>
</comment>
<comment type="similarity">
    <text evidence="1">Belongs to the prokaryotic/mitochondrial release factor family.</text>
</comment>
<keyword id="KW-0963">Cytoplasm</keyword>
<keyword id="KW-0488">Methylation</keyword>
<keyword id="KW-0648">Protein biosynthesis</keyword>
<keyword id="KW-1185">Reference proteome</keyword>
<dbReference type="EMBL" id="CP001348">
    <property type="protein sequence ID" value="ACL74642.1"/>
    <property type="molecule type" value="Genomic_DNA"/>
</dbReference>
<dbReference type="RefSeq" id="WP_012634707.1">
    <property type="nucleotide sequence ID" value="NC_011898.1"/>
</dbReference>
<dbReference type="SMR" id="B8I562"/>
<dbReference type="STRING" id="394503.Ccel_0255"/>
<dbReference type="KEGG" id="cce:Ccel_0255"/>
<dbReference type="eggNOG" id="COG0216">
    <property type="taxonomic scope" value="Bacteria"/>
</dbReference>
<dbReference type="HOGENOM" id="CLU_036856_0_1_9"/>
<dbReference type="OrthoDB" id="9806673at2"/>
<dbReference type="Proteomes" id="UP000001349">
    <property type="component" value="Chromosome"/>
</dbReference>
<dbReference type="GO" id="GO:0005737">
    <property type="term" value="C:cytoplasm"/>
    <property type="evidence" value="ECO:0007669"/>
    <property type="project" value="UniProtKB-SubCell"/>
</dbReference>
<dbReference type="GO" id="GO:0016149">
    <property type="term" value="F:translation release factor activity, codon specific"/>
    <property type="evidence" value="ECO:0007669"/>
    <property type="project" value="UniProtKB-UniRule"/>
</dbReference>
<dbReference type="FunFam" id="3.30.160.20:FF:000004">
    <property type="entry name" value="Peptide chain release factor 1"/>
    <property type="match status" value="1"/>
</dbReference>
<dbReference type="FunFam" id="3.30.70.1660:FF:000002">
    <property type="entry name" value="Peptide chain release factor 1"/>
    <property type="match status" value="1"/>
</dbReference>
<dbReference type="FunFam" id="3.30.70.1660:FF:000004">
    <property type="entry name" value="Peptide chain release factor 1"/>
    <property type="match status" value="1"/>
</dbReference>
<dbReference type="Gene3D" id="3.30.160.20">
    <property type="match status" value="1"/>
</dbReference>
<dbReference type="Gene3D" id="3.30.70.1660">
    <property type="match status" value="1"/>
</dbReference>
<dbReference type="Gene3D" id="6.10.140.1950">
    <property type="match status" value="1"/>
</dbReference>
<dbReference type="HAMAP" id="MF_00093">
    <property type="entry name" value="Rel_fac_1"/>
    <property type="match status" value="1"/>
</dbReference>
<dbReference type="InterPro" id="IPR005139">
    <property type="entry name" value="PCRF"/>
</dbReference>
<dbReference type="InterPro" id="IPR000352">
    <property type="entry name" value="Pep_chain_release_fac_I"/>
</dbReference>
<dbReference type="InterPro" id="IPR045853">
    <property type="entry name" value="Pep_chain_release_fac_I_sf"/>
</dbReference>
<dbReference type="InterPro" id="IPR050057">
    <property type="entry name" value="Prokaryotic/Mito_RF"/>
</dbReference>
<dbReference type="InterPro" id="IPR004373">
    <property type="entry name" value="RF-1"/>
</dbReference>
<dbReference type="NCBIfam" id="TIGR00019">
    <property type="entry name" value="prfA"/>
    <property type="match status" value="1"/>
</dbReference>
<dbReference type="NCBIfam" id="NF001859">
    <property type="entry name" value="PRK00591.1"/>
    <property type="match status" value="1"/>
</dbReference>
<dbReference type="PANTHER" id="PTHR43804">
    <property type="entry name" value="LD18447P"/>
    <property type="match status" value="1"/>
</dbReference>
<dbReference type="PANTHER" id="PTHR43804:SF7">
    <property type="entry name" value="LD18447P"/>
    <property type="match status" value="1"/>
</dbReference>
<dbReference type="Pfam" id="PF03462">
    <property type="entry name" value="PCRF"/>
    <property type="match status" value="1"/>
</dbReference>
<dbReference type="Pfam" id="PF00472">
    <property type="entry name" value="RF-1"/>
    <property type="match status" value="1"/>
</dbReference>
<dbReference type="SMART" id="SM00937">
    <property type="entry name" value="PCRF"/>
    <property type="match status" value="1"/>
</dbReference>
<dbReference type="SUPFAM" id="SSF75620">
    <property type="entry name" value="Release factor"/>
    <property type="match status" value="1"/>
</dbReference>
<dbReference type="PROSITE" id="PS00745">
    <property type="entry name" value="RF_PROK_I"/>
    <property type="match status" value="1"/>
</dbReference>
<gene>
    <name evidence="1" type="primary">prfA</name>
    <name type="ordered locus">Ccel_0255</name>
</gene>
<name>RF1_RUMCH</name>